<evidence type="ECO:0000255" key="1">
    <source>
        <dbReference type="HAMAP-Rule" id="MF_00804"/>
    </source>
</evidence>
<dbReference type="EC" id="1.2.1.8" evidence="1"/>
<dbReference type="EMBL" id="BA000012">
    <property type="protein sequence ID" value="BAB54036.1"/>
    <property type="molecule type" value="Genomic_DNA"/>
</dbReference>
<dbReference type="RefSeq" id="WP_010914984.1">
    <property type="nucleotide sequence ID" value="NC_002678.2"/>
</dbReference>
<dbReference type="SMR" id="Q985M6"/>
<dbReference type="GeneID" id="66685137"/>
<dbReference type="KEGG" id="mlo:mll7608"/>
<dbReference type="eggNOG" id="COG1012">
    <property type="taxonomic scope" value="Bacteria"/>
</dbReference>
<dbReference type="HOGENOM" id="CLU_005391_0_1_5"/>
<dbReference type="UniPathway" id="UPA00529">
    <property type="reaction ID" value="UER00386"/>
</dbReference>
<dbReference type="Proteomes" id="UP000000552">
    <property type="component" value="Chromosome"/>
</dbReference>
<dbReference type="GO" id="GO:0008802">
    <property type="term" value="F:betaine-aldehyde dehydrogenase (NAD+) activity"/>
    <property type="evidence" value="ECO:0007669"/>
    <property type="project" value="UniProtKB-UniRule"/>
</dbReference>
<dbReference type="GO" id="GO:0046872">
    <property type="term" value="F:metal ion binding"/>
    <property type="evidence" value="ECO:0007669"/>
    <property type="project" value="UniProtKB-KW"/>
</dbReference>
<dbReference type="GO" id="GO:0019285">
    <property type="term" value="P:glycine betaine biosynthetic process from choline"/>
    <property type="evidence" value="ECO:0007669"/>
    <property type="project" value="UniProtKB-UniRule"/>
</dbReference>
<dbReference type="CDD" id="cd07090">
    <property type="entry name" value="ALDH_F9_TMBADH"/>
    <property type="match status" value="1"/>
</dbReference>
<dbReference type="FunFam" id="3.40.309.10:FF:000014">
    <property type="entry name" value="NAD/NADP-dependent betaine aldehyde dehydrogenase"/>
    <property type="match status" value="1"/>
</dbReference>
<dbReference type="FunFam" id="3.40.605.10:FF:000007">
    <property type="entry name" value="NAD/NADP-dependent betaine aldehyde dehydrogenase"/>
    <property type="match status" value="1"/>
</dbReference>
<dbReference type="Gene3D" id="3.40.605.10">
    <property type="entry name" value="Aldehyde Dehydrogenase, Chain A, domain 1"/>
    <property type="match status" value="1"/>
</dbReference>
<dbReference type="Gene3D" id="3.40.309.10">
    <property type="entry name" value="Aldehyde Dehydrogenase, Chain A, domain 2"/>
    <property type="match status" value="1"/>
</dbReference>
<dbReference type="HAMAP" id="MF_00804">
    <property type="entry name" value="BADH"/>
    <property type="match status" value="1"/>
</dbReference>
<dbReference type="InterPro" id="IPR016161">
    <property type="entry name" value="Ald_DH/histidinol_DH"/>
</dbReference>
<dbReference type="InterPro" id="IPR016163">
    <property type="entry name" value="Ald_DH_C"/>
</dbReference>
<dbReference type="InterPro" id="IPR016160">
    <property type="entry name" value="Ald_DH_CS_CYS"/>
</dbReference>
<dbReference type="InterPro" id="IPR029510">
    <property type="entry name" value="Ald_DH_CS_GLU"/>
</dbReference>
<dbReference type="InterPro" id="IPR016162">
    <property type="entry name" value="Ald_DH_N"/>
</dbReference>
<dbReference type="InterPro" id="IPR015590">
    <property type="entry name" value="Aldehyde_DH_dom"/>
</dbReference>
<dbReference type="InterPro" id="IPR011264">
    <property type="entry name" value="BADH"/>
</dbReference>
<dbReference type="NCBIfam" id="TIGR01804">
    <property type="entry name" value="BADH"/>
    <property type="match status" value="1"/>
</dbReference>
<dbReference type="NCBIfam" id="NF009725">
    <property type="entry name" value="PRK13252.1"/>
    <property type="match status" value="1"/>
</dbReference>
<dbReference type="PANTHER" id="PTHR11699">
    <property type="entry name" value="ALDEHYDE DEHYDROGENASE-RELATED"/>
    <property type="match status" value="1"/>
</dbReference>
<dbReference type="Pfam" id="PF00171">
    <property type="entry name" value="Aldedh"/>
    <property type="match status" value="1"/>
</dbReference>
<dbReference type="SUPFAM" id="SSF53720">
    <property type="entry name" value="ALDH-like"/>
    <property type="match status" value="1"/>
</dbReference>
<dbReference type="PROSITE" id="PS00070">
    <property type="entry name" value="ALDEHYDE_DEHYDR_CYS"/>
    <property type="match status" value="1"/>
</dbReference>
<dbReference type="PROSITE" id="PS00687">
    <property type="entry name" value="ALDEHYDE_DEHYDR_GLU"/>
    <property type="match status" value="1"/>
</dbReference>
<protein>
    <recommendedName>
        <fullName evidence="1">Betaine aldehyde dehydrogenase</fullName>
        <shortName evidence="1">BADH</shortName>
        <ecNumber evidence="1">1.2.1.8</ecNumber>
    </recommendedName>
</protein>
<comment type="function">
    <text evidence="1">Involved in the biosynthesis of the osmoprotectant glycine betaine. Catalyzes the irreversible oxidation of betaine aldehyde to the corresponding acid.</text>
</comment>
<comment type="catalytic activity">
    <reaction evidence="1">
        <text>betaine aldehyde + NAD(+) + H2O = glycine betaine + NADH + 2 H(+)</text>
        <dbReference type="Rhea" id="RHEA:15305"/>
        <dbReference type="ChEBI" id="CHEBI:15377"/>
        <dbReference type="ChEBI" id="CHEBI:15378"/>
        <dbReference type="ChEBI" id="CHEBI:15710"/>
        <dbReference type="ChEBI" id="CHEBI:17750"/>
        <dbReference type="ChEBI" id="CHEBI:57540"/>
        <dbReference type="ChEBI" id="CHEBI:57945"/>
        <dbReference type="EC" id="1.2.1.8"/>
    </reaction>
    <physiologicalReaction direction="left-to-right" evidence="1">
        <dbReference type="Rhea" id="RHEA:15306"/>
    </physiologicalReaction>
</comment>
<comment type="cofactor">
    <cofactor evidence="1">
        <name>K(+)</name>
        <dbReference type="ChEBI" id="CHEBI:29103"/>
    </cofactor>
    <text evidence="1">Binds 2 potassium ions per subunit.</text>
</comment>
<comment type="pathway">
    <text evidence="1">Amine and polyamine biosynthesis; betaine biosynthesis via choline pathway; betaine from betaine aldehyde: step 1/1.</text>
</comment>
<comment type="subunit">
    <text evidence="1">Dimer of dimers.</text>
</comment>
<comment type="similarity">
    <text evidence="1">Belongs to the aldehyde dehydrogenase family.</text>
</comment>
<reference key="1">
    <citation type="journal article" date="2000" name="DNA Res.">
        <title>Complete genome structure of the nitrogen-fixing symbiotic bacterium Mesorhizobium loti.</title>
        <authorList>
            <person name="Kaneko T."/>
            <person name="Nakamura Y."/>
            <person name="Sato S."/>
            <person name="Asamizu E."/>
            <person name="Kato T."/>
            <person name="Sasamoto S."/>
            <person name="Watanabe A."/>
            <person name="Idesawa K."/>
            <person name="Ishikawa A."/>
            <person name="Kawashima K."/>
            <person name="Kimura T."/>
            <person name="Kishida Y."/>
            <person name="Kiyokawa C."/>
            <person name="Kohara M."/>
            <person name="Matsumoto M."/>
            <person name="Matsuno A."/>
            <person name="Mochizuki Y."/>
            <person name="Nakayama S."/>
            <person name="Nakazaki N."/>
            <person name="Shimpo S."/>
            <person name="Sugimoto M."/>
            <person name="Takeuchi C."/>
            <person name="Yamada M."/>
            <person name="Tabata S."/>
        </authorList>
    </citation>
    <scope>NUCLEOTIDE SEQUENCE [LARGE SCALE GENOMIC DNA]</scope>
    <source>
        <strain>LMG 29417 / CECT 9101 / MAFF 303099</strain>
    </source>
</reference>
<feature type="chain" id="PRO_0000056552" description="Betaine aldehyde dehydrogenase">
    <location>
        <begin position="1"/>
        <end position="487"/>
    </location>
</feature>
<feature type="active site" description="Charge relay system" evidence="1">
    <location>
        <position position="161"/>
    </location>
</feature>
<feature type="active site" description="Proton acceptor" evidence="1">
    <location>
        <position position="249"/>
    </location>
</feature>
<feature type="active site" description="Nucleophile" evidence="1">
    <location>
        <position position="283"/>
    </location>
</feature>
<feature type="active site" description="Charge relay system" evidence="1">
    <location>
        <position position="461"/>
    </location>
</feature>
<feature type="binding site" evidence="1">
    <location>
        <position position="27"/>
    </location>
    <ligand>
        <name>K(+)</name>
        <dbReference type="ChEBI" id="CHEBI:29103"/>
        <label>1</label>
    </ligand>
</feature>
<feature type="binding site" evidence="1">
    <location>
        <position position="93"/>
    </location>
    <ligand>
        <name>K(+)</name>
        <dbReference type="ChEBI" id="CHEBI:29103"/>
        <label>1</label>
    </ligand>
</feature>
<feature type="binding site" evidence="1">
    <location>
        <begin position="149"/>
        <end position="151"/>
    </location>
    <ligand>
        <name>NAD(+)</name>
        <dbReference type="ChEBI" id="CHEBI:57540"/>
    </ligand>
</feature>
<feature type="binding site" evidence="1">
    <location>
        <begin position="175"/>
        <end position="178"/>
    </location>
    <ligand>
        <name>NAD(+)</name>
        <dbReference type="ChEBI" id="CHEBI:57540"/>
    </ligand>
</feature>
<feature type="binding site" evidence="1">
    <location>
        <begin position="228"/>
        <end position="231"/>
    </location>
    <ligand>
        <name>NAD(+)</name>
        <dbReference type="ChEBI" id="CHEBI:57540"/>
    </ligand>
</feature>
<feature type="binding site" evidence="1">
    <location>
        <position position="251"/>
    </location>
    <ligand>
        <name>NAD(+)</name>
        <dbReference type="ChEBI" id="CHEBI:57540"/>
    </ligand>
</feature>
<feature type="binding site" description="covalent" evidence="1">
    <location>
        <position position="283"/>
    </location>
    <ligand>
        <name>NAD(+)</name>
        <dbReference type="ChEBI" id="CHEBI:57540"/>
    </ligand>
</feature>
<feature type="binding site" evidence="1">
    <location>
        <position position="384"/>
    </location>
    <ligand>
        <name>NAD(+)</name>
        <dbReference type="ChEBI" id="CHEBI:57540"/>
    </ligand>
</feature>
<feature type="binding site" evidence="1">
    <location>
        <position position="454"/>
    </location>
    <ligand>
        <name>K(+)</name>
        <dbReference type="ChEBI" id="CHEBI:29103"/>
        <label>2</label>
    </ligand>
</feature>
<feature type="binding site" evidence="1">
    <location>
        <position position="457"/>
    </location>
    <ligand>
        <name>K(+)</name>
        <dbReference type="ChEBI" id="CHEBI:29103"/>
        <label>2</label>
    </ligand>
</feature>
<feature type="modified residue" description="Cysteine sulfenic acid (-SOH)" evidence="1">
    <location>
        <position position="283"/>
    </location>
</feature>
<name>BETB_RHILO</name>
<proteinExistence type="inferred from homology"/>
<sequence length="487" mass="51678">MRAQPTASHYVNGRYIDDEQGAPLPVIYPATGETIAMLRSATPNVLELAIEAARAAQPAWARLKPVERGRILRRAADILRARNADLARIETLDTGKAIQETLVADAPSAADCLEYFGGAVAAYNGEAVDLGGPFAYTRREALGVCVGIGAWNYPIQIAGWKSAPALAMGNAMVFKPSENTPLSALALAEIYSEAGLPDGLFNVVQGYGDVGAGLVGHDVVAKVSVTGSVPTGRKVLSLAGSKMKHATMELGGKSPLIVFDDADIENAIGGAMLGNFYSTGQICSNGTRVFVQSGIHDRFVERLVERTKKIRIGNPLDPETQMGPLVSKAQHEKVVGYIGIGKQDGAVLACGGNVPSLQGFDGGFFVEPTVFTGVTDTMRIAREEIFGPVMSVLKFDGEDEVIDRANDTEFGLAAGVFTRDLPRAHRVIAELQAGTCWINAYNLTPVEIPFGGFKQSGIGRENSLAALALYSQLKSIYVETGDVASPY</sequence>
<keyword id="KW-0479">Metal-binding</keyword>
<keyword id="KW-0520">NAD</keyword>
<keyword id="KW-0521">NADP</keyword>
<keyword id="KW-0558">Oxidation</keyword>
<keyword id="KW-0560">Oxidoreductase</keyword>
<keyword id="KW-0630">Potassium</keyword>
<gene>
    <name evidence="1" type="primary">betB</name>
    <name type="ordered locus">mll7608</name>
</gene>
<accession>Q985M6</accession>
<organism>
    <name type="scientific">Mesorhizobium japonicum (strain LMG 29417 / CECT 9101 / MAFF 303099)</name>
    <name type="common">Mesorhizobium loti (strain MAFF 303099)</name>
    <dbReference type="NCBI Taxonomy" id="266835"/>
    <lineage>
        <taxon>Bacteria</taxon>
        <taxon>Pseudomonadati</taxon>
        <taxon>Pseudomonadota</taxon>
        <taxon>Alphaproteobacteria</taxon>
        <taxon>Hyphomicrobiales</taxon>
        <taxon>Phyllobacteriaceae</taxon>
        <taxon>Mesorhizobium</taxon>
    </lineage>
</organism>